<name>PPE4_PHYN3</name>
<comment type="function">
    <text evidence="3">Effector that enhances plant susceptibility to P.parasitica in Nicotiana benthamiana and Arabidopsis thaliana. Triggers non-specific cell death in a variety of plants, including tobacco, tomato, potato and A.thaliana. E4-induced cell death is dependent on HSP90, NPK and SGT1, suggesting that PpE4 is recognized by the plant immune system.</text>
</comment>
<comment type="subcellular location">
    <subcellularLocation>
        <location evidence="3">Secreted</location>
    </subcellularLocation>
    <text evidence="3">Accumulates around haustoria during plant infection.</text>
</comment>
<comment type="induction">
    <text evidence="3">Expression is highly induced during the early stages of infection.</text>
</comment>
<comment type="domain">
    <text evidence="6">The RxLR-dEER motif acts to carry the protein into the host cell cytoplasm through binding to cell surface phosphatidylinositol-3-phosphate.</text>
</comment>
<comment type="disruption phenotype">
    <text evidence="3">Results in significantly reduced virulence on Nicotiana benthamiana.</text>
</comment>
<comment type="similarity">
    <text evidence="5">Belongs to the RxLR effector family.</text>
</comment>
<keyword id="KW-1185">Reference proteome</keyword>
<keyword id="KW-0964">Secreted</keyword>
<keyword id="KW-0732">Signal</keyword>
<keyword id="KW-0843">Virulence</keyword>
<organism>
    <name type="scientific">Phytophthora nicotianae (strain INRA-310)</name>
    <name type="common">Phytophthora parasitica</name>
    <dbReference type="NCBI Taxonomy" id="761204"/>
    <lineage>
        <taxon>Eukaryota</taxon>
        <taxon>Sar</taxon>
        <taxon>Stramenopiles</taxon>
        <taxon>Oomycota</taxon>
        <taxon>Peronosporales</taxon>
        <taxon>Peronosporaceae</taxon>
        <taxon>Phytophthora</taxon>
    </lineage>
</organism>
<reference key="1">
    <citation type="submission" date="2011-12" db="EMBL/GenBank/DDBJ databases">
        <authorList>
            <consortium name="The Broad Institute Genome Sequencing Platform"/>
            <person name="Russ C."/>
            <person name="Tyler B."/>
            <person name="Panabieres F."/>
            <person name="Shan W."/>
            <person name="Tripathy S."/>
            <person name="Grunwald N."/>
            <person name="Machado M."/>
            <person name="Young S.K."/>
            <person name="Zeng Q."/>
            <person name="Gargeya S."/>
            <person name="Fitzgerald M."/>
            <person name="Haas B."/>
            <person name="Abouelleil A."/>
            <person name="Alvarado L."/>
            <person name="Arachchi H.M."/>
            <person name="Berlin A."/>
            <person name="Chapman S.B."/>
            <person name="Gearin G."/>
            <person name="Goldberg J."/>
            <person name="Griggs A."/>
            <person name="Gujja S."/>
            <person name="Hansen M."/>
            <person name="Heiman D."/>
            <person name="Howarth C."/>
            <person name="Larimer J."/>
            <person name="Lui A."/>
            <person name="MacDonald P.J.P."/>
            <person name="McCowen C."/>
            <person name="Montmayeur A."/>
            <person name="Murphy C."/>
            <person name="Neiman D."/>
            <person name="Pearson M."/>
            <person name="Priest M."/>
            <person name="Roberts A."/>
            <person name="Saif S."/>
            <person name="Shea T."/>
            <person name="Sisk P."/>
            <person name="Stolte C."/>
            <person name="Sykes S."/>
            <person name="Wortman J."/>
            <person name="Nusbaum C."/>
            <person name="Birren B."/>
        </authorList>
    </citation>
    <scope>NUCLEOTIDE SEQUENCE [LARGE SCALE GENOMIC DNA]</scope>
    <source>
        <strain>INRA-310</strain>
    </source>
</reference>
<reference key="2">
    <citation type="submission" date="2013-11" db="EMBL/GenBank/DDBJ databases">
        <title>The Genome Sequence of Phytophthora parasitica INRA-310.</title>
        <authorList>
            <consortium name="The Broad Institute Genomics Platform"/>
            <person name="Russ C."/>
            <person name="Tyler B."/>
            <person name="Panabieres F."/>
            <person name="Shan W."/>
            <person name="Tripathy S."/>
            <person name="Grunwald N."/>
            <person name="Machado M."/>
            <person name="Johnson C.S."/>
            <person name="Arredondo F."/>
            <person name="Hong C."/>
            <person name="Coffey M."/>
            <person name="Young S.K."/>
            <person name="Zeng Q."/>
            <person name="Gargeya S."/>
            <person name="Fitzgerald M."/>
            <person name="Abouelleil A."/>
            <person name="Alvarado L."/>
            <person name="Chapman S.B."/>
            <person name="Gainer-Dewar J."/>
            <person name="Goldberg J."/>
            <person name="Griggs A."/>
            <person name="Gujja S."/>
            <person name="Hansen M."/>
            <person name="Howarth C."/>
            <person name="Imamovic A."/>
            <person name="Ireland A."/>
            <person name="Larimer J."/>
            <person name="McCowan C."/>
            <person name="Murphy C."/>
            <person name="Pearson M."/>
            <person name="Poon T.W."/>
            <person name="Priest M."/>
            <person name="Roberts A."/>
            <person name="Saif S."/>
            <person name="Shea T."/>
            <person name="Sykes S."/>
            <person name="Wortman J."/>
            <person name="Nusbaum C."/>
            <person name="Birren B."/>
        </authorList>
    </citation>
    <scope>NUCLEOTIDE SEQUENCE [LARGE SCALE GENOMIC DNA]</scope>
    <source>
        <strain>INRA-310</strain>
    </source>
</reference>
<reference key="3">
    <citation type="journal article" date="2019" name="Mol. Plant Pathol.">
        <title>An RXLR effector secreted by Phytophthora parasitica is a virulence factor and triggers cell death in various plants.</title>
        <authorList>
            <person name="Huang G."/>
            <person name="Liu Z."/>
            <person name="Gu B."/>
            <person name="Zhao H."/>
            <person name="Jia J."/>
            <person name="Fan G."/>
            <person name="Meng Y."/>
            <person name="Du Y."/>
            <person name="Shan W."/>
        </authorList>
    </citation>
    <scope>FUNCTION</scope>
    <scope>INDUCTION</scope>
    <scope>SUBCELLULAR LOCATION</scope>
    <scope>DISRUPTION PHENOTYPE</scope>
</reference>
<sequence>MRSLFYIAVAVAVFARSSAVAAFTNADDSQLLSKTTPDFATDAMASSDSRKRFLRATDPEDGDLQADDEERTKFKSLADIIKHLDDQDMKHVAGILANMDDIHHKNVLAKALESGRITQKNYDDAIAALQRTSK</sequence>
<evidence type="ECO:0000255" key="1"/>
<evidence type="ECO:0000256" key="2">
    <source>
        <dbReference type="SAM" id="MobiDB-lite"/>
    </source>
</evidence>
<evidence type="ECO:0000269" key="3">
    <source>
    </source>
</evidence>
<evidence type="ECO:0000303" key="4">
    <source>
    </source>
</evidence>
<evidence type="ECO:0000305" key="5"/>
<evidence type="ECO:0000305" key="6">
    <source>
    </source>
</evidence>
<gene>
    <name evidence="4" type="primary">E4</name>
    <name type="ORF">PPTG_00121</name>
</gene>
<proteinExistence type="evidence at transcript level"/>
<protein>
    <recommendedName>
        <fullName evidence="4">RxLR effector protein 4</fullName>
    </recommendedName>
</protein>
<accession>W2RE78</accession>
<feature type="signal peptide" evidence="1">
    <location>
        <begin position="1"/>
        <end position="22"/>
    </location>
</feature>
<feature type="chain" id="PRO_5004824638" description="RxLR effector protein 4">
    <location>
        <begin position="23"/>
        <end position="134"/>
    </location>
</feature>
<feature type="region of interest" description="Disordered" evidence="2">
    <location>
        <begin position="43"/>
        <end position="65"/>
    </location>
</feature>
<feature type="short sequence motif" description="RxLR-dEER" evidence="6">
    <location>
        <begin position="52"/>
        <end position="71"/>
    </location>
</feature>
<feature type="compositionally biased region" description="Basic and acidic residues" evidence="2">
    <location>
        <begin position="48"/>
        <end position="58"/>
    </location>
</feature>
<dbReference type="EMBL" id="KI669561">
    <property type="protein sequence ID" value="ETN23541.1"/>
    <property type="molecule type" value="Genomic_DNA"/>
</dbReference>
<dbReference type="RefSeq" id="XP_008889734.1">
    <property type="nucleotide sequence ID" value="XM_008891486.1"/>
</dbReference>
<dbReference type="STRING" id="761204.W2RE78"/>
<dbReference type="EnsemblProtists" id="ETN23541">
    <property type="protein sequence ID" value="ETN23541"/>
    <property type="gene ID" value="PPTG_00121"/>
</dbReference>
<dbReference type="GeneID" id="20170517"/>
<dbReference type="VEuPathDB" id="FungiDB:PPTG_00121"/>
<dbReference type="OMA" id="MGAIHAD"/>
<dbReference type="OrthoDB" id="39330at4783"/>
<dbReference type="Proteomes" id="UP000018817">
    <property type="component" value="Unassembled WGS sequence"/>
</dbReference>
<dbReference type="GO" id="GO:0005576">
    <property type="term" value="C:extracellular region"/>
    <property type="evidence" value="ECO:0007669"/>
    <property type="project" value="UniProtKB-SubCell"/>
</dbReference>
<dbReference type="InterPro" id="IPR031825">
    <property type="entry name" value="RXLR"/>
</dbReference>
<dbReference type="Pfam" id="PF16810">
    <property type="entry name" value="RXLR"/>
    <property type="match status" value="1"/>
</dbReference>